<dbReference type="EMBL" id="CP001392">
    <property type="protein sequence ID" value="ACM33126.1"/>
    <property type="molecule type" value="Genomic_DNA"/>
</dbReference>
<dbReference type="RefSeq" id="WP_015913216.1">
    <property type="nucleotide sequence ID" value="NC_011992.1"/>
</dbReference>
<dbReference type="SMR" id="B9MIW0"/>
<dbReference type="KEGG" id="dia:Dtpsy_1668"/>
<dbReference type="eggNOG" id="COG1742">
    <property type="taxonomic scope" value="Bacteria"/>
</dbReference>
<dbReference type="HOGENOM" id="CLU_117653_2_0_4"/>
<dbReference type="Proteomes" id="UP000000450">
    <property type="component" value="Chromosome"/>
</dbReference>
<dbReference type="GO" id="GO:0005886">
    <property type="term" value="C:plasma membrane"/>
    <property type="evidence" value="ECO:0007669"/>
    <property type="project" value="UniProtKB-SubCell"/>
</dbReference>
<dbReference type="HAMAP" id="MF_00010">
    <property type="entry name" value="UPF0060"/>
    <property type="match status" value="1"/>
</dbReference>
<dbReference type="InterPro" id="IPR003844">
    <property type="entry name" value="UPF0060"/>
</dbReference>
<dbReference type="NCBIfam" id="NF002586">
    <property type="entry name" value="PRK02237.1"/>
    <property type="match status" value="1"/>
</dbReference>
<dbReference type="PANTHER" id="PTHR36116">
    <property type="entry name" value="UPF0060 MEMBRANE PROTEIN YNFA"/>
    <property type="match status" value="1"/>
</dbReference>
<dbReference type="PANTHER" id="PTHR36116:SF1">
    <property type="entry name" value="UPF0060 MEMBRANE PROTEIN YNFA"/>
    <property type="match status" value="1"/>
</dbReference>
<dbReference type="Pfam" id="PF02694">
    <property type="entry name" value="UPF0060"/>
    <property type="match status" value="1"/>
</dbReference>
<dbReference type="SUPFAM" id="SSF103481">
    <property type="entry name" value="Multidrug resistance efflux transporter EmrE"/>
    <property type="match status" value="1"/>
</dbReference>
<proteinExistence type="inferred from homology"/>
<gene>
    <name type="ordered locus">Dtpsy_1668</name>
</gene>
<protein>
    <recommendedName>
        <fullName evidence="1">UPF0060 membrane protein Dtpsy_1668</fullName>
    </recommendedName>
</protein>
<name>Y1668_ACIET</name>
<sequence length="110" mass="11885">MLPFKTLALFLLTAVAEIVGCYLPWLWLRQGRSAWLLVPAAASLALFAWLLTLHPAATGRVYAAYGGVYVAVALVWLWTVDGVRPGPWDWLGVSVTLCGMAIIAFAPRGG</sequence>
<organism>
    <name type="scientific">Acidovorax ebreus (strain TPSY)</name>
    <name type="common">Diaphorobacter sp. (strain TPSY)</name>
    <dbReference type="NCBI Taxonomy" id="535289"/>
    <lineage>
        <taxon>Bacteria</taxon>
        <taxon>Pseudomonadati</taxon>
        <taxon>Pseudomonadota</taxon>
        <taxon>Betaproteobacteria</taxon>
        <taxon>Burkholderiales</taxon>
        <taxon>Comamonadaceae</taxon>
        <taxon>Diaphorobacter</taxon>
    </lineage>
</organism>
<keyword id="KW-0997">Cell inner membrane</keyword>
<keyword id="KW-1003">Cell membrane</keyword>
<keyword id="KW-0472">Membrane</keyword>
<keyword id="KW-1185">Reference proteome</keyword>
<keyword id="KW-0812">Transmembrane</keyword>
<keyword id="KW-1133">Transmembrane helix</keyword>
<accession>B9MIW0</accession>
<reference key="1">
    <citation type="submission" date="2009-01" db="EMBL/GenBank/DDBJ databases">
        <title>Complete sequence of Diaphorobacter sp. TPSY.</title>
        <authorList>
            <consortium name="US DOE Joint Genome Institute"/>
            <person name="Lucas S."/>
            <person name="Copeland A."/>
            <person name="Lapidus A."/>
            <person name="Glavina del Rio T."/>
            <person name="Tice H."/>
            <person name="Bruce D."/>
            <person name="Goodwin L."/>
            <person name="Pitluck S."/>
            <person name="Chertkov O."/>
            <person name="Brettin T."/>
            <person name="Detter J.C."/>
            <person name="Han C."/>
            <person name="Larimer F."/>
            <person name="Land M."/>
            <person name="Hauser L."/>
            <person name="Kyrpides N."/>
            <person name="Mikhailova N."/>
            <person name="Coates J.D."/>
        </authorList>
    </citation>
    <scope>NUCLEOTIDE SEQUENCE [LARGE SCALE GENOMIC DNA]</scope>
    <source>
        <strain>TPSY</strain>
    </source>
</reference>
<evidence type="ECO:0000255" key="1">
    <source>
        <dbReference type="HAMAP-Rule" id="MF_00010"/>
    </source>
</evidence>
<feature type="chain" id="PRO_1000197485" description="UPF0060 membrane protein Dtpsy_1668">
    <location>
        <begin position="1"/>
        <end position="110"/>
    </location>
</feature>
<feature type="transmembrane region" description="Helical" evidence="1">
    <location>
        <begin position="7"/>
        <end position="27"/>
    </location>
</feature>
<feature type="transmembrane region" description="Helical" evidence="1">
    <location>
        <begin position="33"/>
        <end position="53"/>
    </location>
</feature>
<feature type="transmembrane region" description="Helical" evidence="1">
    <location>
        <begin position="63"/>
        <end position="83"/>
    </location>
</feature>
<feature type="transmembrane region" description="Helical" evidence="1">
    <location>
        <begin position="86"/>
        <end position="106"/>
    </location>
</feature>
<comment type="subcellular location">
    <subcellularLocation>
        <location evidence="1">Cell inner membrane</location>
        <topology evidence="1">Multi-pass membrane protein</topology>
    </subcellularLocation>
</comment>
<comment type="similarity">
    <text evidence="1">Belongs to the UPF0060 family.</text>
</comment>